<keyword id="KW-0997">Cell inner membrane</keyword>
<keyword id="KW-1003">Cell membrane</keyword>
<keyword id="KW-0472">Membrane</keyword>
<keyword id="KW-0812">Transmembrane</keyword>
<keyword id="KW-1133">Transmembrane helix</keyword>
<reference key="1">
    <citation type="journal article" date="2009" name="J. Bacteriol.">
        <title>Complete genome sequence of Aggregatibacter (Haemophilus) aphrophilus NJ8700.</title>
        <authorList>
            <person name="Di Bonaventura M.P."/>
            <person name="DeSalle R."/>
            <person name="Pop M."/>
            <person name="Nagarajan N."/>
            <person name="Figurski D.H."/>
            <person name="Fine D.H."/>
            <person name="Kaplan J.B."/>
            <person name="Planet P.J."/>
        </authorList>
    </citation>
    <scope>NUCLEOTIDE SEQUENCE [LARGE SCALE GENOMIC DNA]</scope>
    <source>
        <strain>NJ8700</strain>
    </source>
</reference>
<dbReference type="EMBL" id="CP001607">
    <property type="protein sequence ID" value="ACS98128.1"/>
    <property type="molecule type" value="Genomic_DNA"/>
</dbReference>
<dbReference type="RefSeq" id="WP_005702061.1">
    <property type="nucleotide sequence ID" value="NZ_CP009230.1"/>
</dbReference>
<dbReference type="KEGG" id="aap:NT05HA_1801"/>
<dbReference type="PATRIC" id="fig|634176.19.peg.1716"/>
<dbReference type="HOGENOM" id="CLU_032288_0_0_6"/>
<dbReference type="GO" id="GO:0005886">
    <property type="term" value="C:plasma membrane"/>
    <property type="evidence" value="ECO:0007669"/>
    <property type="project" value="UniProtKB-SubCell"/>
</dbReference>
<dbReference type="HAMAP" id="MF_00672">
    <property type="entry name" value="UPF0761"/>
    <property type="match status" value="1"/>
</dbReference>
<dbReference type="InterPro" id="IPR023679">
    <property type="entry name" value="UPF0761_bac"/>
</dbReference>
<dbReference type="InterPro" id="IPR017039">
    <property type="entry name" value="Virul_fac_BrkB"/>
</dbReference>
<dbReference type="NCBIfam" id="NF002457">
    <property type="entry name" value="PRK01637.1"/>
    <property type="match status" value="1"/>
</dbReference>
<dbReference type="NCBIfam" id="TIGR00765">
    <property type="entry name" value="yihY_not_rbn"/>
    <property type="match status" value="1"/>
</dbReference>
<dbReference type="PANTHER" id="PTHR30213">
    <property type="entry name" value="INNER MEMBRANE PROTEIN YHJD"/>
    <property type="match status" value="1"/>
</dbReference>
<dbReference type="PANTHER" id="PTHR30213:SF0">
    <property type="entry name" value="UPF0761 MEMBRANE PROTEIN YIHY"/>
    <property type="match status" value="1"/>
</dbReference>
<dbReference type="Pfam" id="PF03631">
    <property type="entry name" value="Virul_fac_BrkB"/>
    <property type="match status" value="1"/>
</dbReference>
<dbReference type="PIRSF" id="PIRSF035875">
    <property type="entry name" value="RNase_BN"/>
    <property type="match status" value="1"/>
</dbReference>
<sequence>MIEWKTFCTIFWQRFNQNKLTQAAGYLTYSTMLAIVPLIMVVFSIFSAFPVFNEVTGALKEFIFTNFAPSASDVVGQYIDEFVNNSKQMSAVGIISLIVVALMLINSIDRTLNSIWHDTSTRPIFTSFAIYWLILTLGPLLVGTSIAASAYVKTMFENASGFSFGLKLLSFVPFLSTWFIFTVIYMVVPNKKVSIKHSAAGALIAAVFFTLGKQAFAWYIVTFPSYQLIYGAMATLPIMLLWIQLSWTFVLLGAQLAAVLAEVRSEKMINLEQIEETK</sequence>
<organism>
    <name type="scientific">Aggregatibacter aphrophilus (strain NJ8700)</name>
    <name type="common">Haemophilus aphrophilus</name>
    <dbReference type="NCBI Taxonomy" id="634176"/>
    <lineage>
        <taxon>Bacteria</taxon>
        <taxon>Pseudomonadati</taxon>
        <taxon>Pseudomonadota</taxon>
        <taxon>Gammaproteobacteria</taxon>
        <taxon>Pasteurellales</taxon>
        <taxon>Pasteurellaceae</taxon>
        <taxon>Aggregatibacter</taxon>
    </lineage>
</organism>
<proteinExistence type="inferred from homology"/>
<comment type="subcellular location">
    <subcellularLocation>
        <location evidence="1">Cell inner membrane</location>
        <topology evidence="1">Multi-pass membrane protein</topology>
    </subcellularLocation>
</comment>
<comment type="similarity">
    <text evidence="1">Belongs to the UPF0761 family.</text>
</comment>
<accession>C6AQL9</accession>
<protein>
    <recommendedName>
        <fullName evidence="1">UPF0761 membrane protein NT05HA_1801</fullName>
    </recommendedName>
</protein>
<evidence type="ECO:0000255" key="1">
    <source>
        <dbReference type="HAMAP-Rule" id="MF_00672"/>
    </source>
</evidence>
<name>Y1801_AGGAN</name>
<gene>
    <name type="ordered locus">NT05HA_1801</name>
</gene>
<feature type="chain" id="PRO_0000391016" description="UPF0761 membrane protein NT05HA_1801">
    <location>
        <begin position="1"/>
        <end position="278"/>
    </location>
</feature>
<feature type="transmembrane region" description="Helical" evidence="1">
    <location>
        <begin position="32"/>
        <end position="52"/>
    </location>
</feature>
<feature type="transmembrane region" description="Helical" evidence="1">
    <location>
        <begin position="88"/>
        <end position="108"/>
    </location>
</feature>
<feature type="transmembrane region" description="Helical" evidence="1">
    <location>
        <begin position="123"/>
        <end position="143"/>
    </location>
</feature>
<feature type="transmembrane region" description="Helical" evidence="1">
    <location>
        <begin position="168"/>
        <end position="188"/>
    </location>
</feature>
<feature type="transmembrane region" description="Helical" evidence="1">
    <location>
        <begin position="203"/>
        <end position="223"/>
    </location>
</feature>
<feature type="transmembrane region" description="Helical" evidence="1">
    <location>
        <begin position="232"/>
        <end position="252"/>
    </location>
</feature>